<protein>
    <recommendedName>
        <fullName evidence="1">Probable glycerol uptake facilitator protein</fullName>
    </recommendedName>
</protein>
<organism>
    <name type="scientific">Mycoplasma genitalium (strain ATCC 33530 / DSM 19775 / NCTC 10195 / G37)</name>
    <name type="common">Mycoplasmoides genitalium</name>
    <dbReference type="NCBI Taxonomy" id="243273"/>
    <lineage>
        <taxon>Bacteria</taxon>
        <taxon>Bacillati</taxon>
        <taxon>Mycoplasmatota</taxon>
        <taxon>Mycoplasmoidales</taxon>
        <taxon>Mycoplasmoidaceae</taxon>
        <taxon>Mycoplasmoides</taxon>
    </lineage>
</organism>
<feature type="chain" id="PRO_0000064087" description="Probable glycerol uptake facilitator protein">
    <location>
        <begin position="1"/>
        <end position="258"/>
    </location>
</feature>
<feature type="transmembrane region" description="Helical" evidence="2">
    <location>
        <begin position="11"/>
        <end position="31"/>
    </location>
</feature>
<feature type="transmembrane region" description="Helical" evidence="2">
    <location>
        <begin position="50"/>
        <end position="70"/>
    </location>
</feature>
<feature type="transmembrane region" description="Helical" evidence="2">
    <location>
        <begin position="95"/>
        <end position="115"/>
    </location>
</feature>
<feature type="transmembrane region" description="Helical" evidence="2">
    <location>
        <begin position="152"/>
        <end position="172"/>
    </location>
</feature>
<feature type="transmembrane region" description="Helical" evidence="2">
    <location>
        <begin position="180"/>
        <end position="200"/>
    </location>
</feature>
<feature type="transmembrane region" description="Helical" evidence="2">
    <location>
        <begin position="233"/>
        <end position="253"/>
    </location>
</feature>
<feature type="short sequence motif" description="NPA 1" evidence="3">
    <location>
        <begin position="77"/>
        <end position="79"/>
    </location>
</feature>
<feature type="short sequence motif" description="NPA 2" evidence="3">
    <location>
        <begin position="206"/>
        <end position="208"/>
    </location>
</feature>
<evidence type="ECO:0000250" key="1">
    <source>
        <dbReference type="UniProtKB" id="P0AER0"/>
    </source>
</evidence>
<evidence type="ECO:0000255" key="2"/>
<evidence type="ECO:0000305" key="3"/>
<proteinExistence type="inferred from homology"/>
<accession>P47279</accession>
<gene>
    <name type="primary">glpF</name>
    <name type="ordered locus">MG033</name>
</gene>
<name>GLPF_MYCGE</name>
<comment type="function">
    <text evidence="1">Mediates glycerol diffusion across the cytoplasmic membrane via a pore-type mechanism.</text>
</comment>
<comment type="catalytic activity">
    <reaction evidence="1">
        <text>glycerol(in) = glycerol(out)</text>
        <dbReference type="Rhea" id="RHEA:29675"/>
        <dbReference type="ChEBI" id="CHEBI:17754"/>
    </reaction>
</comment>
<comment type="subcellular location">
    <subcellularLocation>
        <location evidence="3">Cell membrane</location>
        <topology evidence="2">Multi-pass membrane protein</topology>
    </subcellularLocation>
</comment>
<comment type="domain">
    <text evidence="3">Aquaporins contain two tandem repeats each containing three membrane-spanning domains and a pore-forming loop with the signature motif Asn-Pro-Ala (NPA).</text>
</comment>
<comment type="similarity">
    <text evidence="3">Belongs to the MIP/aquaporin (TC 1.A.8) family.</text>
</comment>
<keyword id="KW-1003">Cell membrane</keyword>
<keyword id="KW-0472">Membrane</keyword>
<keyword id="KW-1185">Reference proteome</keyword>
<keyword id="KW-0677">Repeat</keyword>
<keyword id="KW-0812">Transmembrane</keyword>
<keyword id="KW-1133">Transmembrane helix</keyword>
<keyword id="KW-0813">Transport</keyword>
<sequence length="258" mass="27667">MYFQNSTQLGWWFLAELIGTFILIIFGNGAVAQVNLKKMATSETKAKFLTVALTWGIGVLFGVLTANAIFKGSGHLNPAISLFYAINGSIKSPTALIWPGFVIGILAQFLGAMIAQTTLNFLFWKQLSSTDPQTVLAMHCTSPSVFNITRNFLTEFIATLILIGGVVAASHFLHNNPNSVPPGFMGLWLVAGIIIAFGGATGSAINPARDLGTRIVFQLTPIKNKDANWKYSWIPVIAPLSAGLVLSIIIGFSPAPVL</sequence>
<dbReference type="EMBL" id="L43967">
    <property type="protein sequence ID" value="AAC71249.1"/>
    <property type="molecule type" value="Genomic_DNA"/>
</dbReference>
<dbReference type="RefSeq" id="WP_009885697.1">
    <property type="nucleotide sequence ID" value="NC_000908.2"/>
</dbReference>
<dbReference type="SMR" id="P47279"/>
<dbReference type="FunCoup" id="P47279">
    <property type="interactions" value="40"/>
</dbReference>
<dbReference type="STRING" id="243273.MG_033"/>
<dbReference type="GeneID" id="88282148"/>
<dbReference type="KEGG" id="mge:MG_033"/>
<dbReference type="eggNOG" id="COG0580">
    <property type="taxonomic scope" value="Bacteria"/>
</dbReference>
<dbReference type="HOGENOM" id="CLU_020019_9_2_14"/>
<dbReference type="InParanoid" id="P47279"/>
<dbReference type="OrthoDB" id="9807293at2"/>
<dbReference type="BioCyc" id="MGEN243273:G1GJ2-33-MONOMER"/>
<dbReference type="Proteomes" id="UP000000807">
    <property type="component" value="Chromosome"/>
</dbReference>
<dbReference type="GO" id="GO:0005886">
    <property type="term" value="C:plasma membrane"/>
    <property type="evidence" value="ECO:0000318"/>
    <property type="project" value="GO_Central"/>
</dbReference>
<dbReference type="GO" id="GO:0015254">
    <property type="term" value="F:glycerol channel activity"/>
    <property type="evidence" value="ECO:0000318"/>
    <property type="project" value="GO_Central"/>
</dbReference>
<dbReference type="GO" id="GO:0015793">
    <property type="term" value="P:glycerol transmembrane transport"/>
    <property type="evidence" value="ECO:0000318"/>
    <property type="project" value="GO_Central"/>
</dbReference>
<dbReference type="Gene3D" id="1.20.1080.10">
    <property type="entry name" value="Glycerol uptake facilitator protein"/>
    <property type="match status" value="1"/>
</dbReference>
<dbReference type="InterPro" id="IPR023271">
    <property type="entry name" value="Aquaporin-like"/>
</dbReference>
<dbReference type="InterPro" id="IPR000425">
    <property type="entry name" value="MIP"/>
</dbReference>
<dbReference type="InterPro" id="IPR050363">
    <property type="entry name" value="MIP/Aquaporin"/>
</dbReference>
<dbReference type="InterPro" id="IPR022357">
    <property type="entry name" value="MIP_CS"/>
</dbReference>
<dbReference type="PANTHER" id="PTHR43829">
    <property type="entry name" value="AQUAPORIN OR AQUAGLYCEROPORIN RELATED"/>
    <property type="match status" value="1"/>
</dbReference>
<dbReference type="PANTHER" id="PTHR43829:SF9">
    <property type="entry name" value="AQUAPORIN-9"/>
    <property type="match status" value="1"/>
</dbReference>
<dbReference type="Pfam" id="PF00230">
    <property type="entry name" value="MIP"/>
    <property type="match status" value="1"/>
</dbReference>
<dbReference type="PRINTS" id="PR00783">
    <property type="entry name" value="MINTRINSICP"/>
</dbReference>
<dbReference type="SUPFAM" id="SSF81338">
    <property type="entry name" value="Aquaporin-like"/>
    <property type="match status" value="1"/>
</dbReference>
<dbReference type="PROSITE" id="PS00221">
    <property type="entry name" value="MIP"/>
    <property type="match status" value="1"/>
</dbReference>
<reference key="1">
    <citation type="journal article" date="1995" name="Science">
        <title>The minimal gene complement of Mycoplasma genitalium.</title>
        <authorList>
            <person name="Fraser C.M."/>
            <person name="Gocayne J.D."/>
            <person name="White O."/>
            <person name="Adams M.D."/>
            <person name="Clayton R.A."/>
            <person name="Fleischmann R.D."/>
            <person name="Bult C.J."/>
            <person name="Kerlavage A.R."/>
            <person name="Sutton G.G."/>
            <person name="Kelley J.M."/>
            <person name="Fritchman J.L."/>
            <person name="Weidman J.F."/>
            <person name="Small K.V."/>
            <person name="Sandusky M."/>
            <person name="Fuhrmann J.L."/>
            <person name="Nguyen D.T."/>
            <person name="Utterback T.R."/>
            <person name="Saudek D.M."/>
            <person name="Phillips C.A."/>
            <person name="Merrick J.M."/>
            <person name="Tomb J.-F."/>
            <person name="Dougherty B.A."/>
            <person name="Bott K.F."/>
            <person name="Hu P.-C."/>
            <person name="Lucier T.S."/>
            <person name="Peterson S.N."/>
            <person name="Smith H.O."/>
            <person name="Hutchison C.A. III"/>
            <person name="Venter J.C."/>
        </authorList>
    </citation>
    <scope>NUCLEOTIDE SEQUENCE [LARGE SCALE GENOMIC DNA]</scope>
    <source>
        <strain>ATCC 33530 / DSM 19775 / NCTC 10195 / G37</strain>
    </source>
</reference>